<proteinExistence type="evidence at protein level"/>
<feature type="initiator methionine" description="Removed" evidence="1">
    <location>
        <position position="1"/>
    </location>
</feature>
<feature type="chain" id="PRO_0000056932" description="Asparagine synthetase [glutamine-hydrolyzing] 1">
    <location>
        <begin position="2"/>
        <end position="632"/>
    </location>
</feature>
<feature type="domain" description="Glutamine amidotransferase type-2" evidence="2">
    <location>
        <begin position="2"/>
        <end position="214"/>
    </location>
</feature>
<feature type="active site" description="For GATase activity" evidence="1">
    <location>
        <position position="2"/>
    </location>
</feature>
<feature type="binding site" evidence="1">
    <location>
        <begin position="52"/>
        <end position="56"/>
    </location>
    <ligand>
        <name>L-glutamine</name>
        <dbReference type="ChEBI" id="CHEBI:58359"/>
    </ligand>
</feature>
<feature type="binding site" evidence="1">
    <location>
        <begin position="77"/>
        <end position="79"/>
    </location>
    <ligand>
        <name>L-glutamine</name>
        <dbReference type="ChEBI" id="CHEBI:58359"/>
    </ligand>
</feature>
<feature type="binding site" evidence="1">
    <location>
        <position position="102"/>
    </location>
    <ligand>
        <name>L-glutamine</name>
        <dbReference type="ChEBI" id="CHEBI:58359"/>
    </ligand>
</feature>
<feature type="binding site" evidence="1">
    <location>
        <position position="288"/>
    </location>
    <ligand>
        <name>ATP</name>
        <dbReference type="ChEBI" id="CHEBI:30616"/>
    </ligand>
</feature>
<feature type="binding site" evidence="1">
    <location>
        <begin position="361"/>
        <end position="362"/>
    </location>
    <ligand>
        <name>ATP</name>
        <dbReference type="ChEBI" id="CHEBI:30616"/>
    </ligand>
</feature>
<feature type="site" description="Important for beta-aspartyl-AMP intermediate formation" evidence="1">
    <location>
        <position position="363"/>
    </location>
</feature>
<feature type="sequence conflict" description="In Ref. 2; AAB17067." evidence="3" ref="2">
    <original>EIY</original>
    <variation>VNL</variation>
    <location>
        <begin position="79"/>
        <end position="81"/>
    </location>
</feature>
<evidence type="ECO:0000250" key="1"/>
<evidence type="ECO:0000255" key="2">
    <source>
        <dbReference type="PROSITE-ProRule" id="PRU00609"/>
    </source>
</evidence>
<evidence type="ECO:0000305" key="3"/>
<name>ASNB_BACSU</name>
<sequence>MCGFVGVFNKHPLAQTADQEELIKQMNQMIVHRGPDSDGYFHDEHVGFGFRRLSIIDVENGGQPLSYEDETYWIIFNGEIYNYIELREELEAKGYTFNTDSDTEVLLATYRHYKEEAASKLRGMFAFLIWNKNDHVLYGARDPFGIKPLYYTTINDQVYFASERKSLMVAQNDIEIDKEALQQYMSFQFVPEPSTLDAHVKKVEPGSQFTIRPDGDITFKTYFKANFKPVQTEEDKLVKEVRDAIYDSVNVHMRSDVPVGSFLSGGIDSSFIVSVAKEFHPSLKTFSVGFEQQGFSEVDVAKETAAALGIENISKVISPEEYMNELPKIVWHFDDPLADPAAIPLYFVAKEAKKHVTVALSGEGADELFGGYNIYREPLSLKPFERIPSGLKKMLLHVAAVMPEGMRGKSLLERGCTPLQDRYIGNAKIFEESVKKQLLKHYNPNLSYRDVTKTYFTESSSYSDINKMQYVDIHTWMRGDILLKADKMTMANSLELRVPFLDKVVFDVASKIPDELKTKNGTTKYLLRKAAEGIVPEHVLNRKKLGFPVPIRHWLKNEMNEWVRNIIQESQTDAYIHKDYVLQLLEDHCADKADNSRKIWTVLIFMIWHSINIEKRYMPEELSHQPKEVIFV</sequence>
<comment type="function">
    <text>Main asparagine synthetase in vegetative cells.</text>
</comment>
<comment type="catalytic activity">
    <reaction>
        <text>L-aspartate + L-glutamine + ATP + H2O = L-asparagine + L-glutamate + AMP + diphosphate + H(+)</text>
        <dbReference type="Rhea" id="RHEA:12228"/>
        <dbReference type="ChEBI" id="CHEBI:15377"/>
        <dbReference type="ChEBI" id="CHEBI:15378"/>
        <dbReference type="ChEBI" id="CHEBI:29985"/>
        <dbReference type="ChEBI" id="CHEBI:29991"/>
        <dbReference type="ChEBI" id="CHEBI:30616"/>
        <dbReference type="ChEBI" id="CHEBI:33019"/>
        <dbReference type="ChEBI" id="CHEBI:58048"/>
        <dbReference type="ChEBI" id="CHEBI:58359"/>
        <dbReference type="ChEBI" id="CHEBI:456215"/>
        <dbReference type="EC" id="6.3.5.4"/>
    </reaction>
</comment>
<comment type="pathway">
    <text>Amino-acid biosynthesis; L-asparagine biosynthesis; L-asparagine from L-aspartate (L-Gln route): step 1/1.</text>
</comment>
<comment type="similarity">
    <text evidence="3">Belongs to the asparagine synthetase family.</text>
</comment>
<reference key="1">
    <citation type="journal article" date="1997" name="Microbiology">
        <title>Sequencing and functional annotation of the Bacillus subtilis genes in the 200 kb rrnB-dnaB region.</title>
        <authorList>
            <person name="Lapidus A."/>
            <person name="Galleron N."/>
            <person name="Sorokin A."/>
            <person name="Ehrlich S.D."/>
        </authorList>
    </citation>
    <scope>NUCLEOTIDE SEQUENCE [GENOMIC DNA]</scope>
    <source>
        <strain>168</strain>
    </source>
</reference>
<reference key="2">
    <citation type="journal article" date="1997" name="Nature">
        <title>The complete genome sequence of the Gram-positive bacterium Bacillus subtilis.</title>
        <authorList>
            <person name="Kunst F."/>
            <person name="Ogasawara N."/>
            <person name="Moszer I."/>
            <person name="Albertini A.M."/>
            <person name="Alloni G."/>
            <person name="Azevedo V."/>
            <person name="Bertero M.G."/>
            <person name="Bessieres P."/>
            <person name="Bolotin A."/>
            <person name="Borchert S."/>
            <person name="Borriss R."/>
            <person name="Boursier L."/>
            <person name="Brans A."/>
            <person name="Braun M."/>
            <person name="Brignell S.C."/>
            <person name="Bron S."/>
            <person name="Brouillet S."/>
            <person name="Bruschi C.V."/>
            <person name="Caldwell B."/>
            <person name="Capuano V."/>
            <person name="Carter N.M."/>
            <person name="Choi S.-K."/>
            <person name="Codani J.-J."/>
            <person name="Connerton I.F."/>
            <person name="Cummings N.J."/>
            <person name="Daniel R.A."/>
            <person name="Denizot F."/>
            <person name="Devine K.M."/>
            <person name="Duesterhoeft A."/>
            <person name="Ehrlich S.D."/>
            <person name="Emmerson P.T."/>
            <person name="Entian K.-D."/>
            <person name="Errington J."/>
            <person name="Fabret C."/>
            <person name="Ferrari E."/>
            <person name="Foulger D."/>
            <person name="Fritz C."/>
            <person name="Fujita M."/>
            <person name="Fujita Y."/>
            <person name="Fuma S."/>
            <person name="Galizzi A."/>
            <person name="Galleron N."/>
            <person name="Ghim S.-Y."/>
            <person name="Glaser P."/>
            <person name="Goffeau A."/>
            <person name="Golightly E.J."/>
            <person name="Grandi G."/>
            <person name="Guiseppi G."/>
            <person name="Guy B.J."/>
            <person name="Haga K."/>
            <person name="Haiech J."/>
            <person name="Harwood C.R."/>
            <person name="Henaut A."/>
            <person name="Hilbert H."/>
            <person name="Holsappel S."/>
            <person name="Hosono S."/>
            <person name="Hullo M.-F."/>
            <person name="Itaya M."/>
            <person name="Jones L.-M."/>
            <person name="Joris B."/>
            <person name="Karamata D."/>
            <person name="Kasahara Y."/>
            <person name="Klaerr-Blanchard M."/>
            <person name="Klein C."/>
            <person name="Kobayashi Y."/>
            <person name="Koetter P."/>
            <person name="Koningstein G."/>
            <person name="Krogh S."/>
            <person name="Kumano M."/>
            <person name="Kurita K."/>
            <person name="Lapidus A."/>
            <person name="Lardinois S."/>
            <person name="Lauber J."/>
            <person name="Lazarevic V."/>
            <person name="Lee S.-M."/>
            <person name="Levine A."/>
            <person name="Liu H."/>
            <person name="Masuda S."/>
            <person name="Mauel C."/>
            <person name="Medigue C."/>
            <person name="Medina N."/>
            <person name="Mellado R.P."/>
            <person name="Mizuno M."/>
            <person name="Moestl D."/>
            <person name="Nakai S."/>
            <person name="Noback M."/>
            <person name="Noone D."/>
            <person name="O'Reilly M."/>
            <person name="Ogawa K."/>
            <person name="Ogiwara A."/>
            <person name="Oudega B."/>
            <person name="Park S.-H."/>
            <person name="Parro V."/>
            <person name="Pohl T.M."/>
            <person name="Portetelle D."/>
            <person name="Porwollik S."/>
            <person name="Prescott A.M."/>
            <person name="Presecan E."/>
            <person name="Pujic P."/>
            <person name="Purnelle B."/>
            <person name="Rapoport G."/>
            <person name="Rey M."/>
            <person name="Reynolds S."/>
            <person name="Rieger M."/>
            <person name="Rivolta C."/>
            <person name="Rocha E."/>
            <person name="Roche B."/>
            <person name="Rose M."/>
            <person name="Sadaie Y."/>
            <person name="Sato T."/>
            <person name="Scanlan E."/>
            <person name="Schleich S."/>
            <person name="Schroeter R."/>
            <person name="Scoffone F."/>
            <person name="Sekiguchi J."/>
            <person name="Sekowska A."/>
            <person name="Seror S.J."/>
            <person name="Serror P."/>
            <person name="Shin B.-S."/>
            <person name="Soldo B."/>
            <person name="Sorokin A."/>
            <person name="Tacconi E."/>
            <person name="Takagi T."/>
            <person name="Takahashi H."/>
            <person name="Takemaru K."/>
            <person name="Takeuchi M."/>
            <person name="Tamakoshi A."/>
            <person name="Tanaka T."/>
            <person name="Terpstra P."/>
            <person name="Tognoni A."/>
            <person name="Tosato V."/>
            <person name="Uchiyama S."/>
            <person name="Vandenbol M."/>
            <person name="Vannier F."/>
            <person name="Vassarotti A."/>
            <person name="Viari A."/>
            <person name="Wambutt R."/>
            <person name="Wedler E."/>
            <person name="Wedler H."/>
            <person name="Weitzenegger T."/>
            <person name="Winters P."/>
            <person name="Wipat A."/>
            <person name="Yamamoto H."/>
            <person name="Yamane K."/>
            <person name="Yasumoto K."/>
            <person name="Yata K."/>
            <person name="Yoshida K."/>
            <person name="Yoshikawa H.-F."/>
            <person name="Zumstein E."/>
            <person name="Yoshikawa H."/>
            <person name="Danchin A."/>
        </authorList>
    </citation>
    <scope>NUCLEOTIDE SEQUENCE [LARGE SCALE GENOMIC DNA]</scope>
    <source>
        <strain>168</strain>
    </source>
</reference>
<reference key="3">
    <citation type="journal article" date="1996" name="J. Bacteriol.">
        <title>Cloning and characterization of the metE gene encoding S-adenosylmethionine synthetase from Bacillus subtilis.</title>
        <authorList>
            <person name="Yocum R."/>
            <person name="Perkins J.B."/>
            <person name="Howitt C.L."/>
            <person name="Pero J."/>
        </authorList>
    </citation>
    <scope>NUCLEOTIDE SEQUENCE [GENOMIC DNA] OF 1-81</scope>
    <source>
        <strain>168 / PY79</strain>
    </source>
</reference>
<reference key="4">
    <citation type="journal article" date="1999" name="J. Bacteriol.">
        <title>Three asparagine synthetase genes of Bacillus subtilis.</title>
        <authorList>
            <person name="Yoshida K."/>
            <person name="Fujita Y."/>
            <person name="Ehrlich S.D."/>
        </authorList>
    </citation>
    <scope>CHARACTERIZATION</scope>
</reference>
<accession>P54420</accession>
<accession>O34902</accession>
<protein>
    <recommendedName>
        <fullName>Asparagine synthetase [glutamine-hydrolyzing] 1</fullName>
        <ecNumber>6.3.5.4</ecNumber>
    </recommendedName>
</protein>
<dbReference type="EC" id="6.3.5.4"/>
<dbReference type="EMBL" id="AF008220">
    <property type="protein sequence ID" value="AAC00243.1"/>
    <property type="molecule type" value="Genomic_DNA"/>
</dbReference>
<dbReference type="EMBL" id="AL009126">
    <property type="protein sequence ID" value="CAB15032.1"/>
    <property type="molecule type" value="Genomic_DNA"/>
</dbReference>
<dbReference type="EMBL" id="U52812">
    <property type="protein sequence ID" value="AAB17067.1"/>
    <property type="molecule type" value="Genomic_DNA"/>
</dbReference>
<dbReference type="PIR" id="H69590">
    <property type="entry name" value="H69590"/>
</dbReference>
<dbReference type="RefSeq" id="NP_390932.1">
    <property type="nucleotide sequence ID" value="NC_000964.3"/>
</dbReference>
<dbReference type="RefSeq" id="WP_004398625.1">
    <property type="nucleotide sequence ID" value="NZ_OZ025638.1"/>
</dbReference>
<dbReference type="SMR" id="P54420"/>
<dbReference type="FunCoup" id="P54420">
    <property type="interactions" value="611"/>
</dbReference>
<dbReference type="IntAct" id="P54420">
    <property type="interactions" value="3"/>
</dbReference>
<dbReference type="MINT" id="P54420"/>
<dbReference type="STRING" id="224308.BSU30540"/>
<dbReference type="jPOST" id="P54420"/>
<dbReference type="PaxDb" id="224308-BSU30540"/>
<dbReference type="DNASU" id="937236"/>
<dbReference type="EnsemblBacteria" id="CAB15032">
    <property type="protein sequence ID" value="CAB15032"/>
    <property type="gene ID" value="BSU_30540"/>
</dbReference>
<dbReference type="GeneID" id="937236"/>
<dbReference type="KEGG" id="bsu:BSU30540"/>
<dbReference type="PATRIC" id="fig|224308.179.peg.3312"/>
<dbReference type="eggNOG" id="COG0367">
    <property type="taxonomic scope" value="Bacteria"/>
</dbReference>
<dbReference type="InParanoid" id="P54420"/>
<dbReference type="OrthoDB" id="9763290at2"/>
<dbReference type="PhylomeDB" id="P54420"/>
<dbReference type="BioCyc" id="BSUB:BSU30540-MONOMER"/>
<dbReference type="UniPathway" id="UPA00134">
    <property type="reaction ID" value="UER00195"/>
</dbReference>
<dbReference type="Proteomes" id="UP000001570">
    <property type="component" value="Chromosome"/>
</dbReference>
<dbReference type="GO" id="GO:0004066">
    <property type="term" value="F:asparagine synthase (glutamine-hydrolyzing) activity"/>
    <property type="evidence" value="ECO:0007669"/>
    <property type="project" value="UniProtKB-EC"/>
</dbReference>
<dbReference type="GO" id="GO:0005524">
    <property type="term" value="F:ATP binding"/>
    <property type="evidence" value="ECO:0007669"/>
    <property type="project" value="UniProtKB-KW"/>
</dbReference>
<dbReference type="GO" id="GO:0070981">
    <property type="term" value="P:L-asparagine biosynthetic process"/>
    <property type="evidence" value="ECO:0007669"/>
    <property type="project" value="UniProtKB-UniPathway"/>
</dbReference>
<dbReference type="CDD" id="cd01991">
    <property type="entry name" value="Asn_synthase_B_C"/>
    <property type="match status" value="1"/>
</dbReference>
<dbReference type="CDD" id="cd00712">
    <property type="entry name" value="AsnB"/>
    <property type="match status" value="1"/>
</dbReference>
<dbReference type="Gene3D" id="3.60.20.10">
    <property type="entry name" value="Glutamine Phosphoribosylpyrophosphate, subunit 1, domain 1"/>
    <property type="match status" value="1"/>
</dbReference>
<dbReference type="Gene3D" id="3.40.50.620">
    <property type="entry name" value="HUPs"/>
    <property type="match status" value="1"/>
</dbReference>
<dbReference type="InterPro" id="IPR006426">
    <property type="entry name" value="Asn_synth_AEB"/>
</dbReference>
<dbReference type="InterPro" id="IPR001962">
    <property type="entry name" value="Asn_synthase"/>
</dbReference>
<dbReference type="InterPro" id="IPR051786">
    <property type="entry name" value="ASN_synthetase/amidase"/>
</dbReference>
<dbReference type="InterPro" id="IPR033738">
    <property type="entry name" value="AsnB_N"/>
</dbReference>
<dbReference type="InterPro" id="IPR017932">
    <property type="entry name" value="GATase_2_dom"/>
</dbReference>
<dbReference type="InterPro" id="IPR029055">
    <property type="entry name" value="Ntn_hydrolases_N"/>
</dbReference>
<dbReference type="InterPro" id="IPR014729">
    <property type="entry name" value="Rossmann-like_a/b/a_fold"/>
</dbReference>
<dbReference type="NCBIfam" id="TIGR01536">
    <property type="entry name" value="asn_synth_AEB"/>
    <property type="match status" value="1"/>
</dbReference>
<dbReference type="PANTHER" id="PTHR43284:SF1">
    <property type="entry name" value="ASPARAGINE SYNTHETASE"/>
    <property type="match status" value="1"/>
</dbReference>
<dbReference type="PANTHER" id="PTHR43284">
    <property type="entry name" value="ASPARAGINE SYNTHETASE (GLUTAMINE-HYDROLYZING)"/>
    <property type="match status" value="1"/>
</dbReference>
<dbReference type="Pfam" id="PF00733">
    <property type="entry name" value="Asn_synthase"/>
    <property type="match status" value="1"/>
</dbReference>
<dbReference type="Pfam" id="PF13537">
    <property type="entry name" value="GATase_7"/>
    <property type="match status" value="1"/>
</dbReference>
<dbReference type="PIRSF" id="PIRSF001589">
    <property type="entry name" value="Asn_synthetase_glu-h"/>
    <property type="match status" value="1"/>
</dbReference>
<dbReference type="SUPFAM" id="SSF52402">
    <property type="entry name" value="Adenine nucleotide alpha hydrolases-like"/>
    <property type="match status" value="1"/>
</dbReference>
<dbReference type="SUPFAM" id="SSF56235">
    <property type="entry name" value="N-terminal nucleophile aminohydrolases (Ntn hydrolases)"/>
    <property type="match status" value="1"/>
</dbReference>
<dbReference type="PROSITE" id="PS51278">
    <property type="entry name" value="GATASE_TYPE_2"/>
    <property type="match status" value="1"/>
</dbReference>
<gene>
    <name type="primary">asnB</name>
    <name type="synonym">asn</name>
    <name type="ordered locus">BSU30540</name>
</gene>
<organism>
    <name type="scientific">Bacillus subtilis (strain 168)</name>
    <dbReference type="NCBI Taxonomy" id="224308"/>
    <lineage>
        <taxon>Bacteria</taxon>
        <taxon>Bacillati</taxon>
        <taxon>Bacillota</taxon>
        <taxon>Bacilli</taxon>
        <taxon>Bacillales</taxon>
        <taxon>Bacillaceae</taxon>
        <taxon>Bacillus</taxon>
    </lineage>
</organism>
<keyword id="KW-0028">Amino-acid biosynthesis</keyword>
<keyword id="KW-0061">Asparagine biosynthesis</keyword>
<keyword id="KW-0067">ATP-binding</keyword>
<keyword id="KW-0315">Glutamine amidotransferase</keyword>
<keyword id="KW-0436">Ligase</keyword>
<keyword id="KW-0547">Nucleotide-binding</keyword>
<keyword id="KW-1185">Reference proteome</keyword>